<organism>
    <name type="scientific">Nitratidesulfovibrio vulgaris (strain DP4)</name>
    <name type="common">Desulfovibrio vulgaris</name>
    <dbReference type="NCBI Taxonomy" id="391774"/>
    <lineage>
        <taxon>Bacteria</taxon>
        <taxon>Pseudomonadati</taxon>
        <taxon>Thermodesulfobacteriota</taxon>
        <taxon>Desulfovibrionia</taxon>
        <taxon>Desulfovibrionales</taxon>
        <taxon>Desulfovibrionaceae</taxon>
        <taxon>Nitratidesulfovibrio</taxon>
    </lineage>
</organism>
<evidence type="ECO:0000255" key="1">
    <source>
        <dbReference type="HAMAP-Rule" id="MF_00038"/>
    </source>
</evidence>
<reference key="1">
    <citation type="journal article" date="2009" name="Environ. Microbiol.">
        <title>Contribution of mobile genetic elements to Desulfovibrio vulgaris genome plasticity.</title>
        <authorList>
            <person name="Walker C.B."/>
            <person name="Stolyar S."/>
            <person name="Chivian D."/>
            <person name="Pinel N."/>
            <person name="Gabster J.A."/>
            <person name="Dehal P.S."/>
            <person name="He Z."/>
            <person name="Yang Z.K."/>
            <person name="Yen H.C."/>
            <person name="Zhou J."/>
            <person name="Wall J.D."/>
            <person name="Hazen T.C."/>
            <person name="Arkin A.P."/>
            <person name="Stahl D.A."/>
        </authorList>
    </citation>
    <scope>NUCLEOTIDE SEQUENCE [LARGE SCALE GENOMIC DNA]</scope>
    <source>
        <strain>DP4</strain>
    </source>
</reference>
<accession>A1VBE5</accession>
<name>MRAY_NITV4</name>
<proteinExistence type="inferred from homology"/>
<keyword id="KW-0131">Cell cycle</keyword>
<keyword id="KW-0132">Cell division</keyword>
<keyword id="KW-0997">Cell inner membrane</keyword>
<keyword id="KW-1003">Cell membrane</keyword>
<keyword id="KW-0133">Cell shape</keyword>
<keyword id="KW-0961">Cell wall biogenesis/degradation</keyword>
<keyword id="KW-0460">Magnesium</keyword>
<keyword id="KW-0472">Membrane</keyword>
<keyword id="KW-0479">Metal-binding</keyword>
<keyword id="KW-0573">Peptidoglycan synthesis</keyword>
<keyword id="KW-0808">Transferase</keyword>
<keyword id="KW-0812">Transmembrane</keyword>
<keyword id="KW-1133">Transmembrane helix</keyword>
<comment type="function">
    <text evidence="1">Catalyzes the initial step of the lipid cycle reactions in the biosynthesis of the cell wall peptidoglycan: transfers peptidoglycan precursor phospho-MurNAc-pentapeptide from UDP-MurNAc-pentapeptide onto the lipid carrier undecaprenyl phosphate, yielding undecaprenyl-pyrophosphoryl-MurNAc-pentapeptide, known as lipid I.</text>
</comment>
<comment type="catalytic activity">
    <reaction evidence="1">
        <text>UDP-N-acetyl-alpha-D-muramoyl-L-alanyl-gamma-D-glutamyl-meso-2,6-diaminopimeloyl-D-alanyl-D-alanine + di-trans,octa-cis-undecaprenyl phosphate = di-trans,octa-cis-undecaprenyl diphospho-N-acetyl-alpha-D-muramoyl-L-alanyl-D-glutamyl-meso-2,6-diaminopimeloyl-D-alanyl-D-alanine + UMP</text>
        <dbReference type="Rhea" id="RHEA:28386"/>
        <dbReference type="ChEBI" id="CHEBI:57865"/>
        <dbReference type="ChEBI" id="CHEBI:60392"/>
        <dbReference type="ChEBI" id="CHEBI:61386"/>
        <dbReference type="ChEBI" id="CHEBI:61387"/>
        <dbReference type="EC" id="2.7.8.13"/>
    </reaction>
</comment>
<comment type="cofactor">
    <cofactor evidence="1">
        <name>Mg(2+)</name>
        <dbReference type="ChEBI" id="CHEBI:18420"/>
    </cofactor>
</comment>
<comment type="pathway">
    <text evidence="1">Cell wall biogenesis; peptidoglycan biosynthesis.</text>
</comment>
<comment type="subcellular location">
    <subcellularLocation>
        <location evidence="1">Cell inner membrane</location>
        <topology evidence="1">Multi-pass membrane protein</topology>
    </subcellularLocation>
</comment>
<comment type="similarity">
    <text evidence="1">Belongs to the glycosyltransferase 4 family. MraY subfamily.</text>
</comment>
<sequence length="358" mass="39154">MLYNLLYPLSSDITVFNVFRYITFRSAWALATALLVSIVVGPRFIAWLQRLKCRQFIHEDVTCHMSKAGTPTMGGLLIGFAVTFSVLLWADLRNPYIWLTLLVFTGFGFIGFLDDYTKLRRRNNKGLTASAKFLWQVGVAVAAMYLLVQLPAYSTKLAFPFFKGLTPDLGWLYIPFAVAVMVGSSNGVNLTDGLDGLAIGPTIVAGIVFSIFIYVAGHSQIAGYLQVPYVPGVGEVAVFCGALVGAGLGFLWFNAYPAQVFMGDVGSLSLGGTLGFLAVLCKQELLLLVVGGLFVVETLSVILQVGYFKFSGGKRIFRMAPLHHHFELQGIPESKIIIRFWITSALLGLIALSVLKLR</sequence>
<feature type="chain" id="PRO_1000002966" description="Phospho-N-acetylmuramoyl-pentapeptide-transferase">
    <location>
        <begin position="1"/>
        <end position="358"/>
    </location>
</feature>
<feature type="transmembrane region" description="Helical" evidence="1">
    <location>
        <begin position="28"/>
        <end position="48"/>
    </location>
</feature>
<feature type="transmembrane region" description="Helical" evidence="1">
    <location>
        <begin position="72"/>
        <end position="92"/>
    </location>
</feature>
<feature type="transmembrane region" description="Helical" evidence="1">
    <location>
        <begin position="96"/>
        <end position="116"/>
    </location>
</feature>
<feature type="transmembrane region" description="Helical" evidence="1">
    <location>
        <begin position="133"/>
        <end position="153"/>
    </location>
</feature>
<feature type="transmembrane region" description="Helical" evidence="1">
    <location>
        <begin position="164"/>
        <end position="184"/>
    </location>
</feature>
<feature type="transmembrane region" description="Helical" evidence="1">
    <location>
        <begin position="196"/>
        <end position="216"/>
    </location>
</feature>
<feature type="transmembrane region" description="Helical" evidence="1">
    <location>
        <begin position="233"/>
        <end position="253"/>
    </location>
</feature>
<feature type="transmembrane region" description="Helical" evidence="1">
    <location>
        <begin position="260"/>
        <end position="280"/>
    </location>
</feature>
<feature type="transmembrane region" description="Helical" evidence="1">
    <location>
        <begin position="285"/>
        <end position="305"/>
    </location>
</feature>
<feature type="transmembrane region" description="Helical" evidence="1">
    <location>
        <begin position="335"/>
        <end position="355"/>
    </location>
</feature>
<protein>
    <recommendedName>
        <fullName evidence="1">Phospho-N-acetylmuramoyl-pentapeptide-transferase</fullName>
        <ecNumber evidence="1">2.7.8.13</ecNumber>
    </recommendedName>
    <alternativeName>
        <fullName evidence="1">UDP-MurNAc-pentapeptide phosphotransferase</fullName>
    </alternativeName>
</protein>
<gene>
    <name evidence="1" type="primary">mraY</name>
    <name type="ordered locus">Dvul_0738</name>
</gene>
<dbReference type="EC" id="2.7.8.13" evidence="1"/>
<dbReference type="EMBL" id="CP000527">
    <property type="protein sequence ID" value="ABM27761.1"/>
    <property type="molecule type" value="Genomic_DNA"/>
</dbReference>
<dbReference type="RefSeq" id="WP_010939777.1">
    <property type="nucleotide sequence ID" value="NC_008751.1"/>
</dbReference>
<dbReference type="SMR" id="A1VBE5"/>
<dbReference type="KEGG" id="dvl:Dvul_0738"/>
<dbReference type="HOGENOM" id="CLU_023982_0_0_7"/>
<dbReference type="UniPathway" id="UPA00219"/>
<dbReference type="Proteomes" id="UP000009173">
    <property type="component" value="Chromosome"/>
</dbReference>
<dbReference type="GO" id="GO:0005886">
    <property type="term" value="C:plasma membrane"/>
    <property type="evidence" value="ECO:0007669"/>
    <property type="project" value="UniProtKB-SubCell"/>
</dbReference>
<dbReference type="GO" id="GO:0046872">
    <property type="term" value="F:metal ion binding"/>
    <property type="evidence" value="ECO:0007669"/>
    <property type="project" value="UniProtKB-KW"/>
</dbReference>
<dbReference type="GO" id="GO:0008963">
    <property type="term" value="F:phospho-N-acetylmuramoyl-pentapeptide-transferase activity"/>
    <property type="evidence" value="ECO:0007669"/>
    <property type="project" value="UniProtKB-UniRule"/>
</dbReference>
<dbReference type="GO" id="GO:0051992">
    <property type="term" value="F:UDP-N-acetylmuramoyl-L-alanyl-D-glutamyl-meso-2,6-diaminopimelyl-D-alanyl-D-alanine:undecaprenyl-phosphate transferase activity"/>
    <property type="evidence" value="ECO:0007669"/>
    <property type="project" value="RHEA"/>
</dbReference>
<dbReference type="GO" id="GO:0051301">
    <property type="term" value="P:cell division"/>
    <property type="evidence" value="ECO:0007669"/>
    <property type="project" value="UniProtKB-KW"/>
</dbReference>
<dbReference type="GO" id="GO:0071555">
    <property type="term" value="P:cell wall organization"/>
    <property type="evidence" value="ECO:0007669"/>
    <property type="project" value="UniProtKB-KW"/>
</dbReference>
<dbReference type="GO" id="GO:0009252">
    <property type="term" value="P:peptidoglycan biosynthetic process"/>
    <property type="evidence" value="ECO:0007669"/>
    <property type="project" value="UniProtKB-UniRule"/>
</dbReference>
<dbReference type="GO" id="GO:0008360">
    <property type="term" value="P:regulation of cell shape"/>
    <property type="evidence" value="ECO:0007669"/>
    <property type="project" value="UniProtKB-KW"/>
</dbReference>
<dbReference type="CDD" id="cd06852">
    <property type="entry name" value="GT_MraY"/>
    <property type="match status" value="1"/>
</dbReference>
<dbReference type="HAMAP" id="MF_00038">
    <property type="entry name" value="MraY"/>
    <property type="match status" value="1"/>
</dbReference>
<dbReference type="InterPro" id="IPR000715">
    <property type="entry name" value="Glycosyl_transferase_4"/>
</dbReference>
<dbReference type="InterPro" id="IPR003524">
    <property type="entry name" value="PNAcMuramoyl-5peptid_Trfase"/>
</dbReference>
<dbReference type="InterPro" id="IPR018480">
    <property type="entry name" value="PNAcMuramoyl-5peptid_Trfase_CS"/>
</dbReference>
<dbReference type="NCBIfam" id="TIGR00445">
    <property type="entry name" value="mraY"/>
    <property type="match status" value="1"/>
</dbReference>
<dbReference type="PANTHER" id="PTHR22926">
    <property type="entry name" value="PHOSPHO-N-ACETYLMURAMOYL-PENTAPEPTIDE-TRANSFERASE"/>
    <property type="match status" value="1"/>
</dbReference>
<dbReference type="PANTHER" id="PTHR22926:SF5">
    <property type="entry name" value="PHOSPHO-N-ACETYLMURAMOYL-PENTAPEPTIDE-TRANSFERASE HOMOLOG"/>
    <property type="match status" value="1"/>
</dbReference>
<dbReference type="Pfam" id="PF00953">
    <property type="entry name" value="Glycos_transf_4"/>
    <property type="match status" value="1"/>
</dbReference>
<dbReference type="Pfam" id="PF10555">
    <property type="entry name" value="MraY_sig1"/>
    <property type="match status" value="1"/>
</dbReference>
<dbReference type="PROSITE" id="PS01348">
    <property type="entry name" value="MRAY_2"/>
    <property type="match status" value="1"/>
</dbReference>